<proteinExistence type="inferred from homology"/>
<accession>Q8FVD4</accession>
<accession>G0KDS0</accession>
<gene>
    <name type="ordered locus">BRA0910</name>
    <name type="ordered locus">BS1330_II0902</name>
</gene>
<protein>
    <recommendedName>
        <fullName evidence="1">UPF0309 protein BRA0910/BS1330_II0902</fullName>
    </recommendedName>
</protein>
<comment type="similarity">
    <text evidence="1">Belongs to the UPF0309 family.</text>
</comment>
<feature type="chain" id="PRO_0000068179" description="UPF0309 protein BRA0910/BS1330_II0902">
    <location>
        <begin position="1"/>
        <end position="242"/>
    </location>
</feature>
<feature type="domain" description="SIS" evidence="1">
    <location>
        <begin position="30"/>
        <end position="214"/>
    </location>
</feature>
<sequence length="242" mass="25627">MTEITDRYFNDVIARLSGLRDRLAAQMEKAADLIAAAARADRRVYVFGTGHSHMMAEELHYRAGGLAITVPILCGSIMLQDGAVASSHFERIEGAVRPILDRYGIRDGDVLVVVSNSGVNAAPIEAARYAREKGAAIIALTSVAYSNTIARGRTQLLSLADVVLDNDAPSGDAVLEIAGSALKVGPVSTALGVTILNAVFADVAARLVGEGDAPIYLSANMPGSGDINRSLVERYRDRNPHL</sequence>
<organism>
    <name type="scientific">Brucella suis biovar 1 (strain 1330)</name>
    <dbReference type="NCBI Taxonomy" id="204722"/>
    <lineage>
        <taxon>Bacteria</taxon>
        <taxon>Pseudomonadati</taxon>
        <taxon>Pseudomonadota</taxon>
        <taxon>Alphaproteobacteria</taxon>
        <taxon>Hyphomicrobiales</taxon>
        <taxon>Brucellaceae</taxon>
        <taxon>Brucella/Ochrobactrum group</taxon>
        <taxon>Brucella</taxon>
    </lineage>
</organism>
<dbReference type="EMBL" id="AE014292">
    <property type="protein sequence ID" value="AAN34082.1"/>
    <property type="molecule type" value="Genomic_DNA"/>
</dbReference>
<dbReference type="EMBL" id="CP002998">
    <property type="protein sequence ID" value="AEM20358.1"/>
    <property type="molecule type" value="Genomic_DNA"/>
</dbReference>
<dbReference type="PIR" id="AI3557">
    <property type="entry name" value="AI3557"/>
</dbReference>
<dbReference type="RefSeq" id="WP_004682301.1">
    <property type="nucleotide sequence ID" value="NZ_KN046805.1"/>
</dbReference>
<dbReference type="SMR" id="Q8FVD4"/>
<dbReference type="KEGG" id="bms:BRA0910"/>
<dbReference type="KEGG" id="bsi:BS1330_II0902"/>
<dbReference type="PATRIC" id="fig|204722.22.peg.2497"/>
<dbReference type="HOGENOM" id="CLU_089975_0_0_5"/>
<dbReference type="PhylomeDB" id="Q8FVD4"/>
<dbReference type="Proteomes" id="UP000007104">
    <property type="component" value="Chromosome II"/>
</dbReference>
<dbReference type="GO" id="GO:0097367">
    <property type="term" value="F:carbohydrate derivative binding"/>
    <property type="evidence" value="ECO:0007669"/>
    <property type="project" value="InterPro"/>
</dbReference>
<dbReference type="GO" id="GO:1901135">
    <property type="term" value="P:carbohydrate derivative metabolic process"/>
    <property type="evidence" value="ECO:0007669"/>
    <property type="project" value="InterPro"/>
</dbReference>
<dbReference type="CDD" id="cd05013">
    <property type="entry name" value="SIS_RpiR"/>
    <property type="match status" value="1"/>
</dbReference>
<dbReference type="Gene3D" id="3.40.50.10490">
    <property type="entry name" value="Glucose-6-phosphate isomerase like protein, domain 1"/>
    <property type="match status" value="1"/>
</dbReference>
<dbReference type="HAMAP" id="MF_01240">
    <property type="entry name" value="UPF0309"/>
    <property type="match status" value="1"/>
</dbReference>
<dbReference type="InterPro" id="IPR035472">
    <property type="entry name" value="RpiR-like_SIS"/>
</dbReference>
<dbReference type="InterPro" id="IPR001347">
    <property type="entry name" value="SIS_dom"/>
</dbReference>
<dbReference type="InterPro" id="IPR046348">
    <property type="entry name" value="SIS_dom_sf"/>
</dbReference>
<dbReference type="InterPro" id="IPR050099">
    <property type="entry name" value="SIS_GmhA/DiaA_subfam"/>
</dbReference>
<dbReference type="InterPro" id="IPR022951">
    <property type="entry name" value="UPF0309"/>
</dbReference>
<dbReference type="NCBIfam" id="NF002805">
    <property type="entry name" value="PRK02947.1"/>
    <property type="match status" value="1"/>
</dbReference>
<dbReference type="PANTHER" id="PTHR30390:SF7">
    <property type="entry name" value="PHOSPHOHEPTOSE ISOMERASE"/>
    <property type="match status" value="1"/>
</dbReference>
<dbReference type="PANTHER" id="PTHR30390">
    <property type="entry name" value="SEDOHEPTULOSE 7-PHOSPHATE ISOMERASE / DNAA INITIATOR-ASSOCIATING FACTOR FOR REPLICATION INITIATION"/>
    <property type="match status" value="1"/>
</dbReference>
<dbReference type="Pfam" id="PF13580">
    <property type="entry name" value="SIS_2"/>
    <property type="match status" value="1"/>
</dbReference>
<dbReference type="SUPFAM" id="SSF53697">
    <property type="entry name" value="SIS domain"/>
    <property type="match status" value="1"/>
</dbReference>
<dbReference type="PROSITE" id="PS51464">
    <property type="entry name" value="SIS"/>
    <property type="match status" value="1"/>
</dbReference>
<name>Y3910_BRUSU</name>
<evidence type="ECO:0000255" key="1">
    <source>
        <dbReference type="HAMAP-Rule" id="MF_01240"/>
    </source>
</evidence>
<reference key="1">
    <citation type="journal article" date="2002" name="Proc. Natl. Acad. Sci. U.S.A.">
        <title>The Brucella suis genome reveals fundamental similarities between animal and plant pathogens and symbionts.</title>
        <authorList>
            <person name="Paulsen I.T."/>
            <person name="Seshadri R."/>
            <person name="Nelson K.E."/>
            <person name="Eisen J.A."/>
            <person name="Heidelberg J.F."/>
            <person name="Read T.D."/>
            <person name="Dodson R.J."/>
            <person name="Umayam L.A."/>
            <person name="Brinkac L.M."/>
            <person name="Beanan M.J."/>
            <person name="Daugherty S.C."/>
            <person name="DeBoy R.T."/>
            <person name="Durkin A.S."/>
            <person name="Kolonay J.F."/>
            <person name="Madupu R."/>
            <person name="Nelson W.C."/>
            <person name="Ayodeji B."/>
            <person name="Kraul M."/>
            <person name="Shetty J."/>
            <person name="Malek J.A."/>
            <person name="Van Aken S.E."/>
            <person name="Riedmuller S."/>
            <person name="Tettelin H."/>
            <person name="Gill S.R."/>
            <person name="White O."/>
            <person name="Salzberg S.L."/>
            <person name="Hoover D.L."/>
            <person name="Lindler L.E."/>
            <person name="Halling S.M."/>
            <person name="Boyle S.M."/>
            <person name="Fraser C.M."/>
        </authorList>
    </citation>
    <scope>NUCLEOTIDE SEQUENCE [LARGE SCALE GENOMIC DNA]</scope>
    <source>
        <strain>1330</strain>
    </source>
</reference>
<reference key="2">
    <citation type="journal article" date="2011" name="J. Bacteriol.">
        <title>Revised genome sequence of Brucella suis 1330.</title>
        <authorList>
            <person name="Tae H."/>
            <person name="Shallom S."/>
            <person name="Settlage R."/>
            <person name="Preston D."/>
            <person name="Adams L.G."/>
            <person name="Garner H.R."/>
        </authorList>
    </citation>
    <scope>NUCLEOTIDE SEQUENCE [LARGE SCALE GENOMIC DNA]</scope>
    <source>
        <strain>1330</strain>
    </source>
</reference>